<dbReference type="EC" id="3.1.3.48"/>
<dbReference type="EMBL" id="D17548">
    <property type="protein sequence ID" value="BAA04485.1"/>
    <property type="molecule type" value="Genomic_DNA"/>
</dbReference>
<dbReference type="EMBL" id="U12141">
    <property type="protein sequence ID" value="AAA99659.1"/>
    <property type="molecule type" value="Genomic_DNA"/>
</dbReference>
<dbReference type="EMBL" id="Z71329">
    <property type="protein sequence ID" value="CAA95922.1"/>
    <property type="molecule type" value="Genomic_DNA"/>
</dbReference>
<dbReference type="EMBL" id="X02561">
    <property type="protein sequence ID" value="CAA26402.1"/>
    <property type="molecule type" value="Genomic_DNA"/>
</dbReference>
<dbReference type="EMBL" id="BK006947">
    <property type="protein sequence ID" value="DAA10492.1"/>
    <property type="molecule type" value="Genomic_DNA"/>
</dbReference>
<dbReference type="PIR" id="S58725">
    <property type="entry name" value="S58725"/>
</dbReference>
<dbReference type="RefSeq" id="NP_014345.3">
    <property type="nucleotide sequence ID" value="NM_001182892.3"/>
</dbReference>
<dbReference type="SMR" id="P38590"/>
<dbReference type="BioGRID" id="35771">
    <property type="interactions" value="158"/>
</dbReference>
<dbReference type="DIP" id="DIP-5538N"/>
<dbReference type="ELM" id="P38590"/>
<dbReference type="FunCoup" id="P38590">
    <property type="interactions" value="168"/>
</dbReference>
<dbReference type="IntAct" id="P38590">
    <property type="interactions" value="16"/>
</dbReference>
<dbReference type="MINT" id="P38590"/>
<dbReference type="STRING" id="4932.YNL053W"/>
<dbReference type="GlyGen" id="P38590">
    <property type="glycosylation" value="1 site"/>
</dbReference>
<dbReference type="iPTMnet" id="P38590"/>
<dbReference type="PaxDb" id="4932-YNL053W"/>
<dbReference type="PeptideAtlas" id="P38590"/>
<dbReference type="EnsemblFungi" id="YNL053W_mRNA">
    <property type="protein sequence ID" value="YNL053W"/>
    <property type="gene ID" value="YNL053W"/>
</dbReference>
<dbReference type="GeneID" id="855674"/>
<dbReference type="KEGG" id="sce:YNL053W"/>
<dbReference type="AGR" id="SGD:S000004998"/>
<dbReference type="SGD" id="S000004998">
    <property type="gene designation" value="MSG5"/>
</dbReference>
<dbReference type="VEuPathDB" id="FungiDB:YNL053W"/>
<dbReference type="eggNOG" id="KOG1716">
    <property type="taxonomic scope" value="Eukaryota"/>
</dbReference>
<dbReference type="GeneTree" id="ENSGT00940000175236"/>
<dbReference type="HOGENOM" id="CLU_036115_0_0_1"/>
<dbReference type="InParanoid" id="P38590"/>
<dbReference type="OMA" id="HIEWTHT"/>
<dbReference type="OrthoDB" id="426001at2759"/>
<dbReference type="BioCyc" id="YEAST:G3O-33085-MONOMER"/>
<dbReference type="BioGRID-ORCS" id="855674">
    <property type="hits" value="2 hits in 10 CRISPR screens"/>
</dbReference>
<dbReference type="PRO" id="PR:P38590"/>
<dbReference type="Proteomes" id="UP000002311">
    <property type="component" value="Chromosome XIV"/>
</dbReference>
<dbReference type="RNAct" id="P38590">
    <property type="molecule type" value="protein"/>
</dbReference>
<dbReference type="GO" id="GO:0005737">
    <property type="term" value="C:cytoplasm"/>
    <property type="evidence" value="ECO:0000314"/>
    <property type="project" value="SGD"/>
</dbReference>
<dbReference type="GO" id="GO:0005634">
    <property type="term" value="C:nucleus"/>
    <property type="evidence" value="ECO:0000314"/>
    <property type="project" value="SGD"/>
</dbReference>
<dbReference type="GO" id="GO:0033550">
    <property type="term" value="F:MAP kinase tyrosine phosphatase activity"/>
    <property type="evidence" value="ECO:0000318"/>
    <property type="project" value="GO_Central"/>
</dbReference>
<dbReference type="GO" id="GO:0017017">
    <property type="term" value="F:MAP kinase tyrosine/serine/threonine phosphatase activity"/>
    <property type="evidence" value="ECO:0000318"/>
    <property type="project" value="GO_Central"/>
</dbReference>
<dbReference type="GO" id="GO:0008138">
    <property type="term" value="F:protein tyrosine/serine/threonine phosphatase activity"/>
    <property type="evidence" value="ECO:0000314"/>
    <property type="project" value="SGD"/>
</dbReference>
<dbReference type="GO" id="GO:0008330">
    <property type="term" value="F:protein tyrosine/threonine phosphatase activity"/>
    <property type="evidence" value="ECO:0000318"/>
    <property type="project" value="GO_Central"/>
</dbReference>
<dbReference type="GO" id="GO:0071852">
    <property type="term" value="P:fungal-type cell wall organization or biogenesis"/>
    <property type="evidence" value="ECO:0000314"/>
    <property type="project" value="SGD"/>
</dbReference>
<dbReference type="GO" id="GO:1903138">
    <property type="term" value="P:negative regulation of cell integrity MAPK cascade"/>
    <property type="evidence" value="ECO:0000314"/>
    <property type="project" value="SGD"/>
</dbReference>
<dbReference type="GO" id="GO:0043409">
    <property type="term" value="P:negative regulation of MAPK cascade"/>
    <property type="evidence" value="ECO:0000318"/>
    <property type="project" value="GO_Central"/>
</dbReference>
<dbReference type="GO" id="GO:0071507">
    <property type="term" value="P:pheromone response MAPK cascade"/>
    <property type="evidence" value="ECO:0000315"/>
    <property type="project" value="SGD"/>
</dbReference>
<dbReference type="GO" id="GO:0060237">
    <property type="term" value="P:regulation of fungal-type cell wall organization"/>
    <property type="evidence" value="ECO:0000315"/>
    <property type="project" value="SGD"/>
</dbReference>
<dbReference type="GO" id="GO:0007165">
    <property type="term" value="P:signal transduction"/>
    <property type="evidence" value="ECO:0000318"/>
    <property type="project" value="GO_Central"/>
</dbReference>
<dbReference type="CDD" id="cd14521">
    <property type="entry name" value="DSP_fungal_SDP1-like"/>
    <property type="match status" value="1"/>
</dbReference>
<dbReference type="FunFam" id="3.90.190.10:FF:000094">
    <property type="entry name" value="Probable tyrosine-protein phosphatase"/>
    <property type="match status" value="1"/>
</dbReference>
<dbReference type="Gene3D" id="3.90.190.10">
    <property type="entry name" value="Protein tyrosine phosphatase superfamily"/>
    <property type="match status" value="1"/>
</dbReference>
<dbReference type="InterPro" id="IPR000340">
    <property type="entry name" value="Dual-sp_phosphatase_cat-dom"/>
</dbReference>
<dbReference type="InterPro" id="IPR029021">
    <property type="entry name" value="Prot-tyrosine_phosphatase-like"/>
</dbReference>
<dbReference type="InterPro" id="IPR016130">
    <property type="entry name" value="Tyr_Pase_AS"/>
</dbReference>
<dbReference type="InterPro" id="IPR000387">
    <property type="entry name" value="Tyr_Pase_dom"/>
</dbReference>
<dbReference type="InterPro" id="IPR020422">
    <property type="entry name" value="TYR_PHOSPHATASE_DUAL_dom"/>
</dbReference>
<dbReference type="PANTHER" id="PTHR10159">
    <property type="entry name" value="DUAL SPECIFICITY PROTEIN PHOSPHATASE"/>
    <property type="match status" value="1"/>
</dbReference>
<dbReference type="PANTHER" id="PTHR10159:SF519">
    <property type="entry name" value="DUAL SPECIFICITY PROTEIN PHOSPHATASE MPK3"/>
    <property type="match status" value="1"/>
</dbReference>
<dbReference type="Pfam" id="PF00782">
    <property type="entry name" value="DSPc"/>
    <property type="match status" value="1"/>
</dbReference>
<dbReference type="SMART" id="SM00195">
    <property type="entry name" value="DSPc"/>
    <property type="match status" value="1"/>
</dbReference>
<dbReference type="SUPFAM" id="SSF52799">
    <property type="entry name" value="(Phosphotyrosine protein) phosphatases II"/>
    <property type="match status" value="1"/>
</dbReference>
<dbReference type="PROSITE" id="PS00383">
    <property type="entry name" value="TYR_PHOSPHATASE_1"/>
    <property type="match status" value="1"/>
</dbReference>
<dbReference type="PROSITE" id="PS50056">
    <property type="entry name" value="TYR_PHOSPHATASE_2"/>
    <property type="match status" value="1"/>
</dbReference>
<dbReference type="PROSITE" id="PS50054">
    <property type="entry name" value="TYR_PHOSPHATASE_DUAL"/>
    <property type="match status" value="1"/>
</dbReference>
<name>MSG5_YEAST</name>
<organism>
    <name type="scientific">Saccharomyces cerevisiae (strain ATCC 204508 / S288c)</name>
    <name type="common">Baker's yeast</name>
    <dbReference type="NCBI Taxonomy" id="559292"/>
    <lineage>
        <taxon>Eukaryota</taxon>
        <taxon>Fungi</taxon>
        <taxon>Dikarya</taxon>
        <taxon>Ascomycota</taxon>
        <taxon>Saccharomycotina</taxon>
        <taxon>Saccharomycetes</taxon>
        <taxon>Saccharomycetales</taxon>
        <taxon>Saccharomycetaceae</taxon>
        <taxon>Saccharomyces</taxon>
    </lineage>
</organism>
<proteinExistence type="evidence at protein level"/>
<reference key="1">
    <citation type="journal article" date="1994" name="EMBO J.">
        <title>MSG5, a novel protein phosphatase promotes adaptation to pheromone response in S. cerevisiae.</title>
        <authorList>
            <person name="Doi K."/>
            <person name="Gartner A."/>
            <person name="Ammerer G."/>
            <person name="Errede B."/>
            <person name="Shinkawa H."/>
            <person name="Sugimoto K."/>
            <person name="Matsumoto K."/>
        </authorList>
    </citation>
    <scope>NUCLEOTIDE SEQUENCE [GENOMIC DNA]</scope>
</reference>
<reference key="2">
    <citation type="journal article" date="1995" name="Yeast">
        <title>The sequence of a 44 420 bp fragment located on the left arm of chromosome XIV from Saccharomyces cerevisiae.</title>
        <authorList>
            <person name="Bergez P."/>
            <person name="Doignon F."/>
            <person name="Crouzet M."/>
        </authorList>
    </citation>
    <scope>NUCLEOTIDE SEQUENCE [GENOMIC DNA]</scope>
    <source>
        <strain>S288c / FY1676</strain>
    </source>
</reference>
<reference key="3">
    <citation type="journal article" date="1996" name="Yeast">
        <authorList>
            <person name="Bergez P."/>
            <person name="Doignon F."/>
            <person name="Crouzet M."/>
        </authorList>
    </citation>
    <scope>ERRATUM OF PUBMED:8533472</scope>
</reference>
<reference key="4">
    <citation type="journal article" date="1997" name="Nature">
        <title>The nucleotide sequence of Saccharomyces cerevisiae chromosome XIV and its evolutionary implications.</title>
        <authorList>
            <person name="Philippsen P."/>
            <person name="Kleine K."/>
            <person name="Poehlmann R."/>
            <person name="Duesterhoeft A."/>
            <person name="Hamberg K."/>
            <person name="Hegemann J.H."/>
            <person name="Obermaier B."/>
            <person name="Urrestarazu L.A."/>
            <person name="Aert R."/>
            <person name="Albermann K."/>
            <person name="Altmann R."/>
            <person name="Andre B."/>
            <person name="Baladron V."/>
            <person name="Ballesta J.P.G."/>
            <person name="Becam A.-M."/>
            <person name="Beinhauer J.D."/>
            <person name="Boskovic J."/>
            <person name="Buitrago M.J."/>
            <person name="Bussereau F."/>
            <person name="Coster F."/>
            <person name="Crouzet M."/>
            <person name="D'Angelo M."/>
            <person name="Dal Pero F."/>
            <person name="De Antoni A."/>
            <person name="del Rey F."/>
            <person name="Doignon F."/>
            <person name="Domdey H."/>
            <person name="Dubois E."/>
            <person name="Fiedler T.A."/>
            <person name="Fleig U."/>
            <person name="Floeth M."/>
            <person name="Fritz C."/>
            <person name="Gaillardin C."/>
            <person name="Garcia-Cantalejo J.M."/>
            <person name="Glansdorff N."/>
            <person name="Goffeau A."/>
            <person name="Gueldener U."/>
            <person name="Herbert C.J."/>
            <person name="Heumann K."/>
            <person name="Heuss-Neitzel D."/>
            <person name="Hilbert H."/>
            <person name="Hinni K."/>
            <person name="Iraqui Houssaini I."/>
            <person name="Jacquet M."/>
            <person name="Jimenez A."/>
            <person name="Jonniaux J.-L."/>
            <person name="Karpfinger-Hartl L."/>
            <person name="Lanfranchi G."/>
            <person name="Lepingle A."/>
            <person name="Levesque H."/>
            <person name="Lyck R."/>
            <person name="Maftahi M."/>
            <person name="Mallet L."/>
            <person name="Maurer C.T.C."/>
            <person name="Messenguy F."/>
            <person name="Mewes H.-W."/>
            <person name="Moestl D."/>
            <person name="Nasr F."/>
            <person name="Nicaud J.-M."/>
            <person name="Niedenthal R.K."/>
            <person name="Pandolfo D."/>
            <person name="Pierard A."/>
            <person name="Piravandi E."/>
            <person name="Planta R.J."/>
            <person name="Pohl T.M."/>
            <person name="Purnelle B."/>
            <person name="Rebischung C."/>
            <person name="Remacha M.A."/>
            <person name="Revuelta J.L."/>
            <person name="Rinke M."/>
            <person name="Saiz J.E."/>
            <person name="Sartorello F."/>
            <person name="Scherens B."/>
            <person name="Sen-Gupta M."/>
            <person name="Soler-Mira A."/>
            <person name="Urbanus J.H.M."/>
            <person name="Valle G."/>
            <person name="Van Dyck L."/>
            <person name="Verhasselt P."/>
            <person name="Vierendeels F."/>
            <person name="Vissers S."/>
            <person name="Voet M."/>
            <person name="Volckaert G."/>
            <person name="Wach A."/>
            <person name="Wambutt R."/>
            <person name="Wedler H."/>
            <person name="Zollner A."/>
            <person name="Hani J."/>
        </authorList>
    </citation>
    <scope>NUCLEOTIDE SEQUENCE [LARGE SCALE GENOMIC DNA]</scope>
    <source>
        <strain>ATCC 204508 / S288c</strain>
    </source>
</reference>
<reference key="5">
    <citation type="journal article" date="2014" name="G3 (Bethesda)">
        <title>The reference genome sequence of Saccharomyces cerevisiae: Then and now.</title>
        <authorList>
            <person name="Engel S.R."/>
            <person name="Dietrich F.S."/>
            <person name="Fisk D.G."/>
            <person name="Binkley G."/>
            <person name="Balakrishnan R."/>
            <person name="Costanzo M.C."/>
            <person name="Dwight S.S."/>
            <person name="Hitz B.C."/>
            <person name="Karra K."/>
            <person name="Nash R.S."/>
            <person name="Weng S."/>
            <person name="Wong E.D."/>
            <person name="Lloyd P."/>
            <person name="Skrzypek M.S."/>
            <person name="Miyasato S.R."/>
            <person name="Simison M."/>
            <person name="Cherry J.M."/>
        </authorList>
    </citation>
    <scope>GENOME REANNOTATION</scope>
    <source>
        <strain>ATCC 204508 / S288c</strain>
    </source>
</reference>
<reference key="6">
    <citation type="journal article" date="1985" name="Curr. Genet.">
        <title>Primary structure of a gene for subunit V of the cytochrome c oxidase from Saccharomyces cerevisiae.</title>
        <authorList>
            <person name="Seraphin B."/>
            <person name="Simon M."/>
            <person name="Faye G."/>
        </authorList>
    </citation>
    <scope>NUCLEOTIDE SEQUENCE [GENOMIC DNA] OF 415-489</scope>
</reference>
<reference key="7">
    <citation type="journal article" date="2003" name="Nature">
        <title>Global analysis of protein expression in yeast.</title>
        <authorList>
            <person name="Ghaemmaghami S."/>
            <person name="Huh W.-K."/>
            <person name="Bower K."/>
            <person name="Howson R.W."/>
            <person name="Belle A."/>
            <person name="Dephoure N."/>
            <person name="O'Shea E.K."/>
            <person name="Weissman J.S."/>
        </authorList>
    </citation>
    <scope>LEVEL OF PROTEIN EXPRESSION [LARGE SCALE ANALYSIS]</scope>
</reference>
<reference key="8">
    <citation type="journal article" date="2007" name="J. Proteome Res.">
        <title>Large-scale phosphorylation analysis of alpha-factor-arrested Saccharomyces cerevisiae.</title>
        <authorList>
            <person name="Li X."/>
            <person name="Gerber S.A."/>
            <person name="Rudner A.D."/>
            <person name="Beausoleil S.A."/>
            <person name="Haas W."/>
            <person name="Villen J."/>
            <person name="Elias J.E."/>
            <person name="Gygi S.P."/>
        </authorList>
    </citation>
    <scope>PHOSPHORYLATION [LARGE SCALE ANALYSIS] AT SER-22; SER-151 AND THR-178</scope>
    <scope>IDENTIFICATION BY MASS SPECTROMETRY [LARGE SCALE ANALYSIS]</scope>
    <source>
        <strain>ADR376</strain>
    </source>
</reference>
<reference key="9">
    <citation type="journal article" date="2008" name="Mol. Cell. Proteomics">
        <title>A multidimensional chromatography technology for in-depth phosphoproteome analysis.</title>
        <authorList>
            <person name="Albuquerque C.P."/>
            <person name="Smolka M.B."/>
            <person name="Payne S.H."/>
            <person name="Bafna V."/>
            <person name="Eng J."/>
            <person name="Zhou H."/>
        </authorList>
    </citation>
    <scope>IDENTIFICATION BY MASS SPECTROMETRY [LARGE SCALE ANALYSIS]</scope>
</reference>
<reference key="10">
    <citation type="journal article" date="2009" name="Science">
        <title>Global analysis of Cdk1 substrate phosphorylation sites provides insights into evolution.</title>
        <authorList>
            <person name="Holt L.J."/>
            <person name="Tuch B.B."/>
            <person name="Villen J."/>
            <person name="Johnson A.D."/>
            <person name="Gygi S.P."/>
            <person name="Morgan D.O."/>
        </authorList>
    </citation>
    <scope>PHOSPHORYLATION [LARGE SCALE ANALYSIS] AT SER-98</scope>
    <scope>IDENTIFICATION BY MASS SPECTROMETRY [LARGE SCALE ANALYSIS]</scope>
</reference>
<comment type="function">
    <text>Dual specificity phosphatase that dephosphorylates MAP kinase FUS3 on both a Tyr and a Ser or Thr. Has a role in adaptation to pheromone.</text>
</comment>
<comment type="catalytic activity">
    <reaction evidence="2">
        <text>O-phospho-L-tyrosyl-[protein] + H2O = L-tyrosyl-[protein] + phosphate</text>
        <dbReference type="Rhea" id="RHEA:10684"/>
        <dbReference type="Rhea" id="RHEA-COMP:10136"/>
        <dbReference type="Rhea" id="RHEA-COMP:20101"/>
        <dbReference type="ChEBI" id="CHEBI:15377"/>
        <dbReference type="ChEBI" id="CHEBI:43474"/>
        <dbReference type="ChEBI" id="CHEBI:46858"/>
        <dbReference type="ChEBI" id="CHEBI:61978"/>
        <dbReference type="EC" id="3.1.3.48"/>
    </reaction>
</comment>
<comment type="induction">
    <text>By pheromone.</text>
</comment>
<comment type="miscellaneous">
    <text evidence="4">Present with 538 molecules/cell in log phase SD medium.</text>
</comment>
<comment type="similarity">
    <text evidence="5">Belongs to the protein-tyrosine phosphatase family. Non-receptor class dual specificity subfamily.</text>
</comment>
<sequence>MQFHSDKQHLDSKTDIDFKPNSPRSLQNRNTKNLSLDIAALHPLMEFSSPSQDVPGSVKFPSPTPLNLFMKPKPIVLEKCPPKVSPRPTPPSLSMRRSEASIYTLPTSLKNRTVSPSVYTKSSTVSSISKLSSSSPLSSFSEKPHLNRVHSLSVKTKDLKLKGIRGRSQTISGLETSTPISSTREGTLDSTDVNRFSNQKNMQTTLIFPEEDSDLNIDMVHAEIYQRTVYLDGPLLVLPPNLYLYSEPKLEDILSFDLVINVAKEIPNLEFLIPPEMAHKIKYYHIEWTHTSKIVKDLSRLTRIIHTAHSQGKKILVHCQCGVSRSASLIVAYIMRYYGLSLNDAYNKLKGVAKDISPNMGLIFQLMEWGTMLSKNSPGEEGETVHMPEEDDIGNNEVSSTTKSYSSASFRSFPMVTNLSSSPNDSSVNSSEVTPRTPATLTGARTALATERGEDDEHCKSLSQPADSLEASVDNESISTAPEQMMFLP</sequence>
<evidence type="ECO:0000255" key="1">
    <source>
        <dbReference type="PROSITE-ProRule" id="PRU00160"/>
    </source>
</evidence>
<evidence type="ECO:0000255" key="2">
    <source>
        <dbReference type="PROSITE-ProRule" id="PRU10044"/>
    </source>
</evidence>
<evidence type="ECO:0000256" key="3">
    <source>
        <dbReference type="SAM" id="MobiDB-lite"/>
    </source>
</evidence>
<evidence type="ECO:0000269" key="4">
    <source>
    </source>
</evidence>
<evidence type="ECO:0000305" key="5"/>
<evidence type="ECO:0007744" key="6">
    <source>
    </source>
</evidence>
<evidence type="ECO:0007744" key="7">
    <source>
    </source>
</evidence>
<keyword id="KW-0131">Cell cycle</keyword>
<keyword id="KW-0378">Hydrolase</keyword>
<keyword id="KW-0597">Phosphoprotein</keyword>
<keyword id="KW-0904">Protein phosphatase</keyword>
<keyword id="KW-1185">Reference proteome</keyword>
<accession>P38590</accession>
<accession>D6W1C6</accession>
<gene>
    <name type="primary">MSG5</name>
    <name type="ordered locus">YNL053W</name>
    <name type="ORF">N2480</name>
    <name type="ORF">YNL2480W</name>
</gene>
<feature type="chain" id="PRO_0000094916" description="Tyrosine-protein phosphatase MSG5">
    <location>
        <begin position="1"/>
        <end position="489"/>
    </location>
</feature>
<feature type="domain" description="Tyrosine-protein phosphatase" evidence="1">
    <location>
        <begin position="233"/>
        <end position="375"/>
    </location>
</feature>
<feature type="region of interest" description="Disordered" evidence="3">
    <location>
        <begin position="1"/>
        <end position="30"/>
    </location>
</feature>
<feature type="region of interest" description="Disordered" evidence="3">
    <location>
        <begin position="375"/>
        <end position="401"/>
    </location>
</feature>
<feature type="region of interest" description="Disordered" evidence="3">
    <location>
        <begin position="419"/>
        <end position="489"/>
    </location>
</feature>
<feature type="compositionally biased region" description="Basic and acidic residues" evidence="3">
    <location>
        <begin position="1"/>
        <end position="18"/>
    </location>
</feature>
<feature type="compositionally biased region" description="Low complexity" evidence="3">
    <location>
        <begin position="419"/>
        <end position="450"/>
    </location>
</feature>
<feature type="compositionally biased region" description="Basic and acidic residues" evidence="3">
    <location>
        <begin position="451"/>
        <end position="460"/>
    </location>
</feature>
<feature type="active site" description="Phosphocysteine intermediate" evidence="1">
    <location>
        <position position="319"/>
    </location>
</feature>
<feature type="modified residue" description="Phosphoserine" evidence="6">
    <location>
        <position position="22"/>
    </location>
</feature>
<feature type="modified residue" description="Phosphoserine" evidence="7">
    <location>
        <position position="98"/>
    </location>
</feature>
<feature type="modified residue" description="Phosphoserine" evidence="6">
    <location>
        <position position="151"/>
    </location>
</feature>
<feature type="modified residue" description="Phosphothreonine" evidence="6">
    <location>
        <position position="178"/>
    </location>
</feature>
<feature type="mutagenesis site" description="Loss of activity.">
    <original>C</original>
    <variation>A</variation>
    <location>
        <position position="319"/>
    </location>
</feature>
<feature type="sequence conflict" description="In Ref. 1; BAA04485." evidence="5" ref="1">
    <original>NK</original>
    <variation>DE</variation>
    <location>
        <begin position="347"/>
        <end position="348"/>
    </location>
</feature>
<protein>
    <recommendedName>
        <fullName>Tyrosine-protein phosphatase MSG5</fullName>
        <ecNumber>3.1.3.48</ecNumber>
    </recommendedName>
</protein>